<comment type="function">
    <text evidence="1">ATP-dependent specificity component of the Clp protease. It directs the protease to specific substrates. Can perform chaperone functions in the absence of ClpP.</text>
</comment>
<comment type="subunit">
    <text evidence="1">Component of the ClpX-ClpP complex. Forms a hexameric ring that, in the presence of ATP, binds to fourteen ClpP subunits assembled into a disk-like structure with a central cavity, resembling the structure of eukaryotic proteasomes.</text>
</comment>
<comment type="similarity">
    <text evidence="1">Belongs to the ClpX chaperone family.</text>
</comment>
<dbReference type="EMBL" id="CP000607">
    <property type="protein sequence ID" value="ABP36583.1"/>
    <property type="molecule type" value="Genomic_DNA"/>
</dbReference>
<dbReference type="SMR" id="A4SDM4"/>
<dbReference type="STRING" id="290318.Cvib_0561"/>
<dbReference type="KEGG" id="pvi:Cvib_0561"/>
<dbReference type="eggNOG" id="COG1219">
    <property type="taxonomic scope" value="Bacteria"/>
</dbReference>
<dbReference type="HOGENOM" id="CLU_014218_8_2_10"/>
<dbReference type="OrthoDB" id="9804062at2"/>
<dbReference type="GO" id="GO:0009376">
    <property type="term" value="C:HslUV protease complex"/>
    <property type="evidence" value="ECO:0007669"/>
    <property type="project" value="TreeGrafter"/>
</dbReference>
<dbReference type="GO" id="GO:0005524">
    <property type="term" value="F:ATP binding"/>
    <property type="evidence" value="ECO:0007669"/>
    <property type="project" value="UniProtKB-UniRule"/>
</dbReference>
<dbReference type="GO" id="GO:0016887">
    <property type="term" value="F:ATP hydrolysis activity"/>
    <property type="evidence" value="ECO:0007669"/>
    <property type="project" value="InterPro"/>
</dbReference>
<dbReference type="GO" id="GO:0140662">
    <property type="term" value="F:ATP-dependent protein folding chaperone"/>
    <property type="evidence" value="ECO:0007669"/>
    <property type="project" value="InterPro"/>
</dbReference>
<dbReference type="GO" id="GO:0046983">
    <property type="term" value="F:protein dimerization activity"/>
    <property type="evidence" value="ECO:0007669"/>
    <property type="project" value="InterPro"/>
</dbReference>
<dbReference type="GO" id="GO:0051082">
    <property type="term" value="F:unfolded protein binding"/>
    <property type="evidence" value="ECO:0007669"/>
    <property type="project" value="UniProtKB-UniRule"/>
</dbReference>
<dbReference type="GO" id="GO:0008270">
    <property type="term" value="F:zinc ion binding"/>
    <property type="evidence" value="ECO:0007669"/>
    <property type="project" value="InterPro"/>
</dbReference>
<dbReference type="GO" id="GO:0051301">
    <property type="term" value="P:cell division"/>
    <property type="evidence" value="ECO:0007669"/>
    <property type="project" value="TreeGrafter"/>
</dbReference>
<dbReference type="GO" id="GO:0051603">
    <property type="term" value="P:proteolysis involved in protein catabolic process"/>
    <property type="evidence" value="ECO:0007669"/>
    <property type="project" value="TreeGrafter"/>
</dbReference>
<dbReference type="CDD" id="cd19497">
    <property type="entry name" value="RecA-like_ClpX"/>
    <property type="match status" value="1"/>
</dbReference>
<dbReference type="FunFam" id="1.10.8.60:FF:000002">
    <property type="entry name" value="ATP-dependent Clp protease ATP-binding subunit ClpX"/>
    <property type="match status" value="1"/>
</dbReference>
<dbReference type="Gene3D" id="1.10.8.60">
    <property type="match status" value="1"/>
</dbReference>
<dbReference type="Gene3D" id="6.20.220.10">
    <property type="entry name" value="ClpX chaperone, C4-type zinc finger domain"/>
    <property type="match status" value="1"/>
</dbReference>
<dbReference type="Gene3D" id="3.40.50.300">
    <property type="entry name" value="P-loop containing nucleotide triphosphate hydrolases"/>
    <property type="match status" value="1"/>
</dbReference>
<dbReference type="HAMAP" id="MF_00175">
    <property type="entry name" value="ClpX"/>
    <property type="match status" value="1"/>
</dbReference>
<dbReference type="InterPro" id="IPR003593">
    <property type="entry name" value="AAA+_ATPase"/>
</dbReference>
<dbReference type="InterPro" id="IPR050052">
    <property type="entry name" value="ATP-dep_Clp_protease_ClpX"/>
</dbReference>
<dbReference type="InterPro" id="IPR003959">
    <property type="entry name" value="ATPase_AAA_core"/>
</dbReference>
<dbReference type="InterPro" id="IPR019489">
    <property type="entry name" value="Clp_ATPase_C"/>
</dbReference>
<dbReference type="InterPro" id="IPR004487">
    <property type="entry name" value="Clp_protease_ATP-bd_su_ClpX"/>
</dbReference>
<dbReference type="InterPro" id="IPR046425">
    <property type="entry name" value="ClpX_bact"/>
</dbReference>
<dbReference type="InterPro" id="IPR027417">
    <property type="entry name" value="P-loop_NTPase"/>
</dbReference>
<dbReference type="InterPro" id="IPR010603">
    <property type="entry name" value="Znf_CppX_C4"/>
</dbReference>
<dbReference type="InterPro" id="IPR038366">
    <property type="entry name" value="Znf_CppX_C4_sf"/>
</dbReference>
<dbReference type="NCBIfam" id="TIGR00382">
    <property type="entry name" value="clpX"/>
    <property type="match status" value="1"/>
</dbReference>
<dbReference type="NCBIfam" id="NF003745">
    <property type="entry name" value="PRK05342.1"/>
    <property type="match status" value="1"/>
</dbReference>
<dbReference type="PANTHER" id="PTHR48102:SF7">
    <property type="entry name" value="ATP-DEPENDENT CLP PROTEASE ATP-BINDING SUBUNIT CLPX-LIKE, MITOCHONDRIAL"/>
    <property type="match status" value="1"/>
</dbReference>
<dbReference type="PANTHER" id="PTHR48102">
    <property type="entry name" value="ATP-DEPENDENT CLP PROTEASE ATP-BINDING SUBUNIT CLPX-LIKE, MITOCHONDRIAL-RELATED"/>
    <property type="match status" value="1"/>
</dbReference>
<dbReference type="Pfam" id="PF07724">
    <property type="entry name" value="AAA_2"/>
    <property type="match status" value="1"/>
</dbReference>
<dbReference type="Pfam" id="PF10431">
    <property type="entry name" value="ClpB_D2-small"/>
    <property type="match status" value="1"/>
</dbReference>
<dbReference type="Pfam" id="PF06689">
    <property type="entry name" value="zf-C4_ClpX"/>
    <property type="match status" value="1"/>
</dbReference>
<dbReference type="SMART" id="SM00382">
    <property type="entry name" value="AAA"/>
    <property type="match status" value="1"/>
</dbReference>
<dbReference type="SMART" id="SM01086">
    <property type="entry name" value="ClpB_D2-small"/>
    <property type="match status" value="1"/>
</dbReference>
<dbReference type="SMART" id="SM00994">
    <property type="entry name" value="zf-C4_ClpX"/>
    <property type="match status" value="1"/>
</dbReference>
<dbReference type="SUPFAM" id="SSF57716">
    <property type="entry name" value="Glucocorticoid receptor-like (DNA-binding domain)"/>
    <property type="match status" value="1"/>
</dbReference>
<dbReference type="SUPFAM" id="SSF52540">
    <property type="entry name" value="P-loop containing nucleoside triphosphate hydrolases"/>
    <property type="match status" value="1"/>
</dbReference>
<dbReference type="PROSITE" id="PS51902">
    <property type="entry name" value="CLPX_ZB"/>
    <property type="match status" value="1"/>
</dbReference>
<accession>A4SDM4</accession>
<keyword id="KW-0067">ATP-binding</keyword>
<keyword id="KW-0143">Chaperone</keyword>
<keyword id="KW-0479">Metal-binding</keyword>
<keyword id="KW-0547">Nucleotide-binding</keyword>
<keyword id="KW-0862">Zinc</keyword>
<gene>
    <name evidence="1" type="primary">clpX</name>
    <name type="ordered locus">Cvib_0561</name>
</gene>
<proteinExistence type="inferred from homology"/>
<protein>
    <recommendedName>
        <fullName evidence="1">ATP-dependent Clp protease ATP-binding subunit ClpX</fullName>
    </recommendedName>
</protein>
<evidence type="ECO:0000255" key="1">
    <source>
        <dbReference type="HAMAP-Rule" id="MF_00175"/>
    </source>
</evidence>
<evidence type="ECO:0000255" key="2">
    <source>
        <dbReference type="PROSITE-ProRule" id="PRU01250"/>
    </source>
</evidence>
<organism>
    <name type="scientific">Chlorobium phaeovibrioides (strain DSM 265 / 1930)</name>
    <name type="common">Prosthecochloris vibrioformis (strain DSM 265)</name>
    <dbReference type="NCBI Taxonomy" id="290318"/>
    <lineage>
        <taxon>Bacteria</taxon>
        <taxon>Pseudomonadati</taxon>
        <taxon>Chlorobiota</taxon>
        <taxon>Chlorobiia</taxon>
        <taxon>Chlorobiales</taxon>
        <taxon>Chlorobiaceae</taxon>
        <taxon>Chlorobium/Pelodictyon group</taxon>
        <taxon>Chlorobium</taxon>
    </lineage>
</organism>
<sequence length="438" mass="47802">MTREKVPAKGKARTSGGPGEPVYCSFCGRSSQEVDSMVAGPNAFICDRCIRTSHDILRKELSAIQHPEPVADQPFPVKLVSPKALMESLDQYVVGQERAKKALSVAVYNHYKRIDSQEWQHDDDEVVIEKSNIMLIGPTGTGKTLLAQTLANLLEVPFSIVDATSLTEAGYVGDDVETILARLLHASDFNLERAERGIIYVDEIDKIARKSANVSITRDVSGEGVQQALLKILEGAVVGVPPKGGRKHPEQQLININTKNILFICGGAFEGLDRLIARRMSKSSMGFGAGVADKKAGYDPGILKFVMQDDLHEYGLIPEFIGRLPVLSSLEPLDEHALRSILVEPKNALIKQYAKLFEMDGVELEFAPESLDRVVAIALERGTGARALRSVLENVMIDIMFELPSMKGIGKCIITADTIDGTGSPTYLTEDGKKKKTA</sequence>
<name>CLPX_CHLPM</name>
<reference key="1">
    <citation type="submission" date="2007-03" db="EMBL/GenBank/DDBJ databases">
        <title>Complete sequence of Prosthecochloris vibrioformis DSM 265.</title>
        <authorList>
            <consortium name="US DOE Joint Genome Institute"/>
            <person name="Copeland A."/>
            <person name="Lucas S."/>
            <person name="Lapidus A."/>
            <person name="Barry K."/>
            <person name="Detter J.C."/>
            <person name="Glavina del Rio T."/>
            <person name="Hammon N."/>
            <person name="Israni S."/>
            <person name="Pitluck S."/>
            <person name="Schmutz J."/>
            <person name="Larimer F."/>
            <person name="Land M."/>
            <person name="Hauser L."/>
            <person name="Mikhailova N."/>
            <person name="Li T."/>
            <person name="Overmann J."/>
            <person name="Schuster S.C."/>
            <person name="Bryant D.A."/>
            <person name="Richardson P."/>
        </authorList>
    </citation>
    <scope>NUCLEOTIDE SEQUENCE [LARGE SCALE GENOMIC DNA]</scope>
    <source>
        <strain>DSM 265 / 1930</strain>
    </source>
</reference>
<feature type="chain" id="PRO_1000077167" description="ATP-dependent Clp protease ATP-binding subunit ClpX">
    <location>
        <begin position="1"/>
        <end position="438"/>
    </location>
</feature>
<feature type="domain" description="ClpX-type ZB" evidence="2">
    <location>
        <begin position="11"/>
        <end position="65"/>
    </location>
</feature>
<feature type="binding site" evidence="2">
    <location>
        <position position="24"/>
    </location>
    <ligand>
        <name>Zn(2+)</name>
        <dbReference type="ChEBI" id="CHEBI:29105"/>
    </ligand>
</feature>
<feature type="binding site" evidence="2">
    <location>
        <position position="27"/>
    </location>
    <ligand>
        <name>Zn(2+)</name>
        <dbReference type="ChEBI" id="CHEBI:29105"/>
    </ligand>
</feature>
<feature type="binding site" evidence="2">
    <location>
        <position position="46"/>
    </location>
    <ligand>
        <name>Zn(2+)</name>
        <dbReference type="ChEBI" id="CHEBI:29105"/>
    </ligand>
</feature>
<feature type="binding site" evidence="2">
    <location>
        <position position="49"/>
    </location>
    <ligand>
        <name>Zn(2+)</name>
        <dbReference type="ChEBI" id="CHEBI:29105"/>
    </ligand>
</feature>
<feature type="binding site" evidence="1">
    <location>
        <begin position="138"/>
        <end position="145"/>
    </location>
    <ligand>
        <name>ATP</name>
        <dbReference type="ChEBI" id="CHEBI:30616"/>
    </ligand>
</feature>